<name>RL7_BRUA1</name>
<evidence type="ECO:0000255" key="1">
    <source>
        <dbReference type="HAMAP-Rule" id="MF_00368"/>
    </source>
</evidence>
<evidence type="ECO:0000305" key="2"/>
<sequence>MADLAKIVEDLSALTVLEAAELSKLLEEKWGVSAAAPVAVAAAGGAAPAAAAEEKTEFDVVLADGGANKINVIKEVRALTGLGLKEAKDLVEGAPKAVKEGASKDEAEKIKAQLEAAGAKVELK</sequence>
<proteinExistence type="inferred from homology"/>
<gene>
    <name evidence="1" type="primary">rplL</name>
    <name type="ordered locus">BAbS19_I11800</name>
</gene>
<dbReference type="EMBL" id="CP000887">
    <property type="protein sequence ID" value="ACD72685.1"/>
    <property type="molecule type" value="Genomic_DNA"/>
</dbReference>
<dbReference type="RefSeq" id="WP_002964371.1">
    <property type="nucleotide sequence ID" value="NC_010742.1"/>
</dbReference>
<dbReference type="SMR" id="B2S688"/>
<dbReference type="GeneID" id="97533516"/>
<dbReference type="KEGG" id="bmc:BAbS19_I11800"/>
<dbReference type="HOGENOM" id="CLU_086499_3_0_5"/>
<dbReference type="Proteomes" id="UP000002565">
    <property type="component" value="Chromosome 1"/>
</dbReference>
<dbReference type="GO" id="GO:0022625">
    <property type="term" value="C:cytosolic large ribosomal subunit"/>
    <property type="evidence" value="ECO:0007669"/>
    <property type="project" value="TreeGrafter"/>
</dbReference>
<dbReference type="GO" id="GO:0003729">
    <property type="term" value="F:mRNA binding"/>
    <property type="evidence" value="ECO:0007669"/>
    <property type="project" value="TreeGrafter"/>
</dbReference>
<dbReference type="GO" id="GO:0003735">
    <property type="term" value="F:structural constituent of ribosome"/>
    <property type="evidence" value="ECO:0007669"/>
    <property type="project" value="InterPro"/>
</dbReference>
<dbReference type="GO" id="GO:0006412">
    <property type="term" value="P:translation"/>
    <property type="evidence" value="ECO:0007669"/>
    <property type="project" value="UniProtKB-UniRule"/>
</dbReference>
<dbReference type="CDD" id="cd00387">
    <property type="entry name" value="Ribosomal_L7_L12"/>
    <property type="match status" value="1"/>
</dbReference>
<dbReference type="FunFam" id="3.30.1390.10:FF:000001">
    <property type="entry name" value="50S ribosomal protein L7/L12"/>
    <property type="match status" value="1"/>
</dbReference>
<dbReference type="Gene3D" id="3.30.1390.10">
    <property type="match status" value="1"/>
</dbReference>
<dbReference type="Gene3D" id="1.20.5.710">
    <property type="entry name" value="Single helix bin"/>
    <property type="match status" value="1"/>
</dbReference>
<dbReference type="HAMAP" id="MF_00368">
    <property type="entry name" value="Ribosomal_bL12"/>
    <property type="match status" value="1"/>
</dbReference>
<dbReference type="InterPro" id="IPR000206">
    <property type="entry name" value="Ribosomal_bL12"/>
</dbReference>
<dbReference type="InterPro" id="IPR013823">
    <property type="entry name" value="Ribosomal_bL12_C"/>
</dbReference>
<dbReference type="InterPro" id="IPR014719">
    <property type="entry name" value="Ribosomal_bL12_C/ClpS-like"/>
</dbReference>
<dbReference type="InterPro" id="IPR008932">
    <property type="entry name" value="Ribosomal_bL12_oligo"/>
</dbReference>
<dbReference type="InterPro" id="IPR036235">
    <property type="entry name" value="Ribosomal_bL12_oligo_N_sf"/>
</dbReference>
<dbReference type="NCBIfam" id="TIGR00855">
    <property type="entry name" value="L12"/>
    <property type="match status" value="1"/>
</dbReference>
<dbReference type="PANTHER" id="PTHR45987">
    <property type="entry name" value="39S RIBOSOMAL PROTEIN L12"/>
    <property type="match status" value="1"/>
</dbReference>
<dbReference type="PANTHER" id="PTHR45987:SF4">
    <property type="entry name" value="LARGE RIBOSOMAL SUBUNIT PROTEIN BL12M"/>
    <property type="match status" value="1"/>
</dbReference>
<dbReference type="Pfam" id="PF00542">
    <property type="entry name" value="Ribosomal_L12"/>
    <property type="match status" value="1"/>
</dbReference>
<dbReference type="Pfam" id="PF16320">
    <property type="entry name" value="Ribosomal_L12_N"/>
    <property type="match status" value="1"/>
</dbReference>
<dbReference type="SUPFAM" id="SSF54736">
    <property type="entry name" value="ClpS-like"/>
    <property type="match status" value="1"/>
</dbReference>
<dbReference type="SUPFAM" id="SSF48300">
    <property type="entry name" value="Ribosomal protein L7/12, oligomerisation (N-terminal) domain"/>
    <property type="match status" value="1"/>
</dbReference>
<comment type="function">
    <text evidence="1">Forms part of the ribosomal stalk which helps the ribosome interact with GTP-bound translation factors. Is thus essential for accurate translation.</text>
</comment>
<comment type="subunit">
    <text evidence="1">Homodimer. Part of the ribosomal stalk of the 50S ribosomal subunit. Forms a multimeric L10(L12)X complex, where L10 forms an elongated spine to which 2 to 4 L12 dimers bind in a sequential fashion. Binds GTP-bound translation factors.</text>
</comment>
<comment type="similarity">
    <text evidence="1">Belongs to the bacterial ribosomal protein bL12 family.</text>
</comment>
<keyword id="KW-0687">Ribonucleoprotein</keyword>
<keyword id="KW-0689">Ribosomal protein</keyword>
<protein>
    <recommendedName>
        <fullName evidence="1">Large ribosomal subunit protein bL12</fullName>
    </recommendedName>
    <alternativeName>
        <fullName evidence="2">50S ribosomal protein L7/L12</fullName>
    </alternativeName>
</protein>
<organism>
    <name type="scientific">Brucella abortus (strain S19)</name>
    <dbReference type="NCBI Taxonomy" id="430066"/>
    <lineage>
        <taxon>Bacteria</taxon>
        <taxon>Pseudomonadati</taxon>
        <taxon>Pseudomonadota</taxon>
        <taxon>Alphaproteobacteria</taxon>
        <taxon>Hyphomicrobiales</taxon>
        <taxon>Brucellaceae</taxon>
        <taxon>Brucella/Ochrobactrum group</taxon>
        <taxon>Brucella</taxon>
    </lineage>
</organism>
<reference key="1">
    <citation type="journal article" date="2008" name="PLoS ONE">
        <title>Genome sequence of Brucella abortus vaccine strain S19 compared to virulent strains yields candidate virulence genes.</title>
        <authorList>
            <person name="Crasta O.R."/>
            <person name="Folkerts O."/>
            <person name="Fei Z."/>
            <person name="Mane S.P."/>
            <person name="Evans C."/>
            <person name="Martino-Catt S."/>
            <person name="Bricker B."/>
            <person name="Yu G."/>
            <person name="Du L."/>
            <person name="Sobral B.W."/>
        </authorList>
    </citation>
    <scope>NUCLEOTIDE SEQUENCE [LARGE SCALE GENOMIC DNA]</scope>
    <source>
        <strain>S19</strain>
    </source>
</reference>
<feature type="chain" id="PRO_1000121400" description="Large ribosomal subunit protein bL12">
    <location>
        <begin position="1"/>
        <end position="124"/>
    </location>
</feature>
<accession>B2S688</accession>